<reference key="1">
    <citation type="journal article" date="2006" name="PLoS Genet.">
        <title>The complete genome sequence and comparative genome analysis of the high pathogenicity Yersinia enterocolitica strain 8081.</title>
        <authorList>
            <person name="Thomson N.R."/>
            <person name="Howard S."/>
            <person name="Wren B.W."/>
            <person name="Holden M.T.G."/>
            <person name="Crossman L."/>
            <person name="Challis G.L."/>
            <person name="Churcher C."/>
            <person name="Mungall K."/>
            <person name="Brooks K."/>
            <person name="Chillingworth T."/>
            <person name="Feltwell T."/>
            <person name="Abdellah Z."/>
            <person name="Hauser H."/>
            <person name="Jagels K."/>
            <person name="Maddison M."/>
            <person name="Moule S."/>
            <person name="Sanders M."/>
            <person name="Whitehead S."/>
            <person name="Quail M.A."/>
            <person name="Dougan G."/>
            <person name="Parkhill J."/>
            <person name="Prentice M.B."/>
        </authorList>
    </citation>
    <scope>NUCLEOTIDE SEQUENCE [LARGE SCALE GENOMIC DNA]</scope>
    <source>
        <strain>NCTC 13174 / 8081</strain>
    </source>
</reference>
<dbReference type="EC" id="2.7.4.22" evidence="1"/>
<dbReference type="EMBL" id="AM286415">
    <property type="protein sequence ID" value="CAL13312.1"/>
    <property type="molecule type" value="Genomic_DNA"/>
</dbReference>
<dbReference type="RefSeq" id="WP_005164053.1">
    <property type="nucleotide sequence ID" value="NC_008800.1"/>
</dbReference>
<dbReference type="RefSeq" id="YP_001007456.1">
    <property type="nucleotide sequence ID" value="NC_008800.1"/>
</dbReference>
<dbReference type="SMR" id="A1JP80"/>
<dbReference type="GeneID" id="31412013"/>
<dbReference type="KEGG" id="yen:YE3282"/>
<dbReference type="PATRIC" id="fig|393305.7.peg.3491"/>
<dbReference type="eggNOG" id="COG0528">
    <property type="taxonomic scope" value="Bacteria"/>
</dbReference>
<dbReference type="HOGENOM" id="CLU_033861_0_0_6"/>
<dbReference type="OrthoDB" id="9807458at2"/>
<dbReference type="UniPathway" id="UPA00159">
    <property type="reaction ID" value="UER00275"/>
</dbReference>
<dbReference type="Proteomes" id="UP000000642">
    <property type="component" value="Chromosome"/>
</dbReference>
<dbReference type="GO" id="GO:0005829">
    <property type="term" value="C:cytosol"/>
    <property type="evidence" value="ECO:0007669"/>
    <property type="project" value="TreeGrafter"/>
</dbReference>
<dbReference type="GO" id="GO:0005524">
    <property type="term" value="F:ATP binding"/>
    <property type="evidence" value="ECO:0007669"/>
    <property type="project" value="UniProtKB-KW"/>
</dbReference>
<dbReference type="GO" id="GO:0033862">
    <property type="term" value="F:UMP kinase activity"/>
    <property type="evidence" value="ECO:0007669"/>
    <property type="project" value="UniProtKB-EC"/>
</dbReference>
<dbReference type="GO" id="GO:0044210">
    <property type="term" value="P:'de novo' CTP biosynthetic process"/>
    <property type="evidence" value="ECO:0007669"/>
    <property type="project" value="UniProtKB-UniRule"/>
</dbReference>
<dbReference type="GO" id="GO:0006225">
    <property type="term" value="P:UDP biosynthetic process"/>
    <property type="evidence" value="ECO:0007669"/>
    <property type="project" value="TreeGrafter"/>
</dbReference>
<dbReference type="CDD" id="cd04254">
    <property type="entry name" value="AAK_UMPK-PyrH-Ec"/>
    <property type="match status" value="1"/>
</dbReference>
<dbReference type="FunFam" id="3.40.1160.10:FF:000001">
    <property type="entry name" value="Uridylate kinase"/>
    <property type="match status" value="1"/>
</dbReference>
<dbReference type="Gene3D" id="3.40.1160.10">
    <property type="entry name" value="Acetylglutamate kinase-like"/>
    <property type="match status" value="1"/>
</dbReference>
<dbReference type="HAMAP" id="MF_01220_B">
    <property type="entry name" value="PyrH_B"/>
    <property type="match status" value="1"/>
</dbReference>
<dbReference type="InterPro" id="IPR036393">
    <property type="entry name" value="AceGlu_kinase-like_sf"/>
</dbReference>
<dbReference type="InterPro" id="IPR001048">
    <property type="entry name" value="Asp/Glu/Uridylate_kinase"/>
</dbReference>
<dbReference type="InterPro" id="IPR011817">
    <property type="entry name" value="Uridylate_kinase"/>
</dbReference>
<dbReference type="InterPro" id="IPR015963">
    <property type="entry name" value="Uridylate_kinase_bac"/>
</dbReference>
<dbReference type="NCBIfam" id="TIGR02075">
    <property type="entry name" value="pyrH_bact"/>
    <property type="match status" value="1"/>
</dbReference>
<dbReference type="PANTHER" id="PTHR42833">
    <property type="entry name" value="URIDYLATE KINASE"/>
    <property type="match status" value="1"/>
</dbReference>
<dbReference type="PANTHER" id="PTHR42833:SF4">
    <property type="entry name" value="URIDYLATE KINASE PUMPKIN, CHLOROPLASTIC"/>
    <property type="match status" value="1"/>
</dbReference>
<dbReference type="Pfam" id="PF00696">
    <property type="entry name" value="AA_kinase"/>
    <property type="match status" value="1"/>
</dbReference>
<dbReference type="PIRSF" id="PIRSF005650">
    <property type="entry name" value="Uridylate_kin"/>
    <property type="match status" value="1"/>
</dbReference>
<dbReference type="SUPFAM" id="SSF53633">
    <property type="entry name" value="Carbamate kinase-like"/>
    <property type="match status" value="1"/>
</dbReference>
<proteinExistence type="inferred from homology"/>
<accession>A1JP80</accession>
<protein>
    <recommendedName>
        <fullName evidence="1">Uridylate kinase</fullName>
        <shortName evidence="1">UK</shortName>
        <ecNumber evidence="1">2.7.4.22</ecNumber>
    </recommendedName>
    <alternativeName>
        <fullName evidence="1">Uridine monophosphate kinase</fullName>
        <shortName evidence="1">UMP kinase</shortName>
        <shortName evidence="1">UMPK</shortName>
    </alternativeName>
</protein>
<gene>
    <name evidence="1" type="primary">pyrH</name>
    <name type="ordered locus">YE3282</name>
</gene>
<sequence>MATNAKPVYQRILLKLSGEALQGAEGFGIDASVLDRMAQEVKELVELGIQVGVVIGGGNLFRGAGLAQAGMNRVVGDHMGMLATVMNGLAMRDALHRAYVNARLMSAIPLNGVCDNYSWAEAISLLRHNRVVIFAAGTGNPFFTTDSAACLRGIEIEADVVLKATKVDGVYSADPVKNPDATLYEQLTYQDVLERELKVMDLAAFTLARDHNLPIRVFNMNKPGALRRVVMGENEGTLITKEVAAVTK</sequence>
<feature type="chain" id="PRO_1000054055" description="Uridylate kinase">
    <location>
        <begin position="1"/>
        <end position="248"/>
    </location>
</feature>
<feature type="region of interest" description="Involved in allosteric activation by GTP" evidence="1">
    <location>
        <begin position="23"/>
        <end position="28"/>
    </location>
</feature>
<feature type="binding site" evidence="1">
    <location>
        <begin position="15"/>
        <end position="18"/>
    </location>
    <ligand>
        <name>ATP</name>
        <dbReference type="ChEBI" id="CHEBI:30616"/>
    </ligand>
</feature>
<feature type="binding site" evidence="1">
    <location>
        <position position="57"/>
    </location>
    <ligand>
        <name>UMP</name>
        <dbReference type="ChEBI" id="CHEBI:57865"/>
    </ligand>
</feature>
<feature type="binding site" evidence="1">
    <location>
        <position position="58"/>
    </location>
    <ligand>
        <name>ATP</name>
        <dbReference type="ChEBI" id="CHEBI:30616"/>
    </ligand>
</feature>
<feature type="binding site" evidence="1">
    <location>
        <position position="62"/>
    </location>
    <ligand>
        <name>ATP</name>
        <dbReference type="ChEBI" id="CHEBI:30616"/>
    </ligand>
</feature>
<feature type="binding site" evidence="1">
    <location>
        <position position="77"/>
    </location>
    <ligand>
        <name>UMP</name>
        <dbReference type="ChEBI" id="CHEBI:57865"/>
    </ligand>
</feature>
<feature type="binding site" evidence="1">
    <location>
        <begin position="138"/>
        <end position="145"/>
    </location>
    <ligand>
        <name>UMP</name>
        <dbReference type="ChEBI" id="CHEBI:57865"/>
    </ligand>
</feature>
<feature type="binding site" evidence="1">
    <location>
        <position position="165"/>
    </location>
    <ligand>
        <name>ATP</name>
        <dbReference type="ChEBI" id="CHEBI:30616"/>
    </ligand>
</feature>
<feature type="binding site" evidence="1">
    <location>
        <position position="171"/>
    </location>
    <ligand>
        <name>ATP</name>
        <dbReference type="ChEBI" id="CHEBI:30616"/>
    </ligand>
</feature>
<feature type="binding site" evidence="1">
    <location>
        <position position="174"/>
    </location>
    <ligand>
        <name>ATP</name>
        <dbReference type="ChEBI" id="CHEBI:30616"/>
    </ligand>
</feature>
<keyword id="KW-0021">Allosteric enzyme</keyword>
<keyword id="KW-0067">ATP-binding</keyword>
<keyword id="KW-0963">Cytoplasm</keyword>
<keyword id="KW-0418">Kinase</keyword>
<keyword id="KW-0547">Nucleotide-binding</keyword>
<keyword id="KW-0665">Pyrimidine biosynthesis</keyword>
<keyword id="KW-0808">Transferase</keyword>
<organism>
    <name type="scientific">Yersinia enterocolitica serotype O:8 / biotype 1B (strain NCTC 13174 / 8081)</name>
    <dbReference type="NCBI Taxonomy" id="393305"/>
    <lineage>
        <taxon>Bacteria</taxon>
        <taxon>Pseudomonadati</taxon>
        <taxon>Pseudomonadota</taxon>
        <taxon>Gammaproteobacteria</taxon>
        <taxon>Enterobacterales</taxon>
        <taxon>Yersiniaceae</taxon>
        <taxon>Yersinia</taxon>
    </lineage>
</organism>
<evidence type="ECO:0000255" key="1">
    <source>
        <dbReference type="HAMAP-Rule" id="MF_01220"/>
    </source>
</evidence>
<name>PYRH_YERE8</name>
<comment type="function">
    <text evidence="1">Catalyzes the reversible phosphorylation of UMP to UDP.</text>
</comment>
<comment type="catalytic activity">
    <reaction evidence="1">
        <text>UMP + ATP = UDP + ADP</text>
        <dbReference type="Rhea" id="RHEA:24400"/>
        <dbReference type="ChEBI" id="CHEBI:30616"/>
        <dbReference type="ChEBI" id="CHEBI:57865"/>
        <dbReference type="ChEBI" id="CHEBI:58223"/>
        <dbReference type="ChEBI" id="CHEBI:456216"/>
        <dbReference type="EC" id="2.7.4.22"/>
    </reaction>
</comment>
<comment type="activity regulation">
    <text evidence="1">Allosterically activated by GTP. Inhibited by UTP.</text>
</comment>
<comment type="pathway">
    <text evidence="1">Pyrimidine metabolism; CTP biosynthesis via de novo pathway; UDP from UMP (UMPK route): step 1/1.</text>
</comment>
<comment type="subunit">
    <text evidence="1">Homohexamer.</text>
</comment>
<comment type="subcellular location">
    <subcellularLocation>
        <location evidence="1">Cytoplasm</location>
    </subcellularLocation>
</comment>
<comment type="similarity">
    <text evidence="1">Belongs to the UMP kinase family.</text>
</comment>